<feature type="chain" id="PRO_1000123283" description="Phosphopantetheine adenylyltransferase">
    <location>
        <begin position="1"/>
        <end position="168"/>
    </location>
</feature>
<feature type="binding site" evidence="1">
    <location>
        <begin position="9"/>
        <end position="10"/>
    </location>
    <ligand>
        <name>ATP</name>
        <dbReference type="ChEBI" id="CHEBI:30616"/>
    </ligand>
</feature>
<feature type="binding site" evidence="1">
    <location>
        <position position="9"/>
    </location>
    <ligand>
        <name>substrate</name>
    </ligand>
</feature>
<feature type="binding site" evidence="1">
    <location>
        <position position="17"/>
    </location>
    <ligand>
        <name>ATP</name>
        <dbReference type="ChEBI" id="CHEBI:30616"/>
    </ligand>
</feature>
<feature type="binding site" evidence="1">
    <location>
        <position position="41"/>
    </location>
    <ligand>
        <name>substrate</name>
    </ligand>
</feature>
<feature type="binding site" evidence="1">
    <location>
        <position position="73"/>
    </location>
    <ligand>
        <name>substrate</name>
    </ligand>
</feature>
<feature type="binding site" evidence="1">
    <location>
        <position position="87"/>
    </location>
    <ligand>
        <name>substrate</name>
    </ligand>
</feature>
<feature type="binding site" evidence="1">
    <location>
        <begin position="88"/>
        <end position="90"/>
    </location>
    <ligand>
        <name>ATP</name>
        <dbReference type="ChEBI" id="CHEBI:30616"/>
    </ligand>
</feature>
<feature type="binding site" evidence="1">
    <location>
        <position position="98"/>
    </location>
    <ligand>
        <name>ATP</name>
        <dbReference type="ChEBI" id="CHEBI:30616"/>
    </ligand>
</feature>
<feature type="binding site" evidence="1">
    <location>
        <begin position="123"/>
        <end position="129"/>
    </location>
    <ligand>
        <name>ATP</name>
        <dbReference type="ChEBI" id="CHEBI:30616"/>
    </ligand>
</feature>
<feature type="site" description="Transition state stabilizer" evidence="1">
    <location>
        <position position="17"/>
    </location>
</feature>
<comment type="function">
    <text evidence="1">Reversibly transfers an adenylyl group from ATP to 4'-phosphopantetheine, yielding dephospho-CoA (dPCoA) and pyrophosphate.</text>
</comment>
<comment type="catalytic activity">
    <reaction evidence="1">
        <text>(R)-4'-phosphopantetheine + ATP + H(+) = 3'-dephospho-CoA + diphosphate</text>
        <dbReference type="Rhea" id="RHEA:19801"/>
        <dbReference type="ChEBI" id="CHEBI:15378"/>
        <dbReference type="ChEBI" id="CHEBI:30616"/>
        <dbReference type="ChEBI" id="CHEBI:33019"/>
        <dbReference type="ChEBI" id="CHEBI:57328"/>
        <dbReference type="ChEBI" id="CHEBI:61723"/>
        <dbReference type="EC" id="2.7.7.3"/>
    </reaction>
</comment>
<comment type="cofactor">
    <cofactor evidence="1">
        <name>Mg(2+)</name>
        <dbReference type="ChEBI" id="CHEBI:18420"/>
    </cofactor>
</comment>
<comment type="pathway">
    <text evidence="1">Cofactor biosynthesis; coenzyme A biosynthesis; CoA from (R)-pantothenate: step 4/5.</text>
</comment>
<comment type="subunit">
    <text evidence="1">Homohexamer.</text>
</comment>
<comment type="subcellular location">
    <subcellularLocation>
        <location evidence="1">Cytoplasm</location>
    </subcellularLocation>
</comment>
<comment type="similarity">
    <text evidence="1">Belongs to the bacterial CoaD family.</text>
</comment>
<gene>
    <name evidence="1" type="primary">coaD</name>
    <name type="ordered locus">Dole_2741</name>
</gene>
<protein>
    <recommendedName>
        <fullName evidence="1">Phosphopantetheine adenylyltransferase</fullName>
        <ecNumber evidence="1">2.7.7.3</ecNumber>
    </recommendedName>
    <alternativeName>
        <fullName evidence="1">Dephospho-CoA pyrophosphorylase</fullName>
    </alternativeName>
    <alternativeName>
        <fullName evidence="1">Pantetheine-phosphate adenylyltransferase</fullName>
        <shortName evidence="1">PPAT</shortName>
    </alternativeName>
</protein>
<sequence length="168" mass="19001">MKIAIYPGSFDPVTNGHIDIIQRGRHLFDKIIVSILLNPGKKALFSLDERLDMLTESLKDIDGVEVDSFAGLLIDYAERKNAKAILRGMRAVSDFEYEFQMALMNRRLNRDIQTVFLMTGMRWIYTSSSIIKEAATFGGDISGMVPAIVEKKLEEKIGYVVNHKKAED</sequence>
<dbReference type="EC" id="2.7.7.3" evidence="1"/>
<dbReference type="EMBL" id="CP000859">
    <property type="protein sequence ID" value="ABW68544.1"/>
    <property type="molecule type" value="Genomic_DNA"/>
</dbReference>
<dbReference type="RefSeq" id="WP_012176155.1">
    <property type="nucleotide sequence ID" value="NC_009943.1"/>
</dbReference>
<dbReference type="SMR" id="A8ZXR7"/>
<dbReference type="STRING" id="96561.Dole_2741"/>
<dbReference type="KEGG" id="dol:Dole_2741"/>
<dbReference type="eggNOG" id="COG0669">
    <property type="taxonomic scope" value="Bacteria"/>
</dbReference>
<dbReference type="HOGENOM" id="CLU_100149_0_1_7"/>
<dbReference type="OrthoDB" id="9806661at2"/>
<dbReference type="UniPathway" id="UPA00241">
    <property type="reaction ID" value="UER00355"/>
</dbReference>
<dbReference type="Proteomes" id="UP000008561">
    <property type="component" value="Chromosome"/>
</dbReference>
<dbReference type="GO" id="GO:0005737">
    <property type="term" value="C:cytoplasm"/>
    <property type="evidence" value="ECO:0007669"/>
    <property type="project" value="UniProtKB-SubCell"/>
</dbReference>
<dbReference type="GO" id="GO:0005524">
    <property type="term" value="F:ATP binding"/>
    <property type="evidence" value="ECO:0007669"/>
    <property type="project" value="UniProtKB-KW"/>
</dbReference>
<dbReference type="GO" id="GO:0004595">
    <property type="term" value="F:pantetheine-phosphate adenylyltransferase activity"/>
    <property type="evidence" value="ECO:0007669"/>
    <property type="project" value="UniProtKB-UniRule"/>
</dbReference>
<dbReference type="GO" id="GO:0015937">
    <property type="term" value="P:coenzyme A biosynthetic process"/>
    <property type="evidence" value="ECO:0007669"/>
    <property type="project" value="UniProtKB-UniRule"/>
</dbReference>
<dbReference type="CDD" id="cd02163">
    <property type="entry name" value="PPAT"/>
    <property type="match status" value="1"/>
</dbReference>
<dbReference type="Gene3D" id="3.40.50.620">
    <property type="entry name" value="HUPs"/>
    <property type="match status" value="1"/>
</dbReference>
<dbReference type="HAMAP" id="MF_00151">
    <property type="entry name" value="PPAT_bact"/>
    <property type="match status" value="1"/>
</dbReference>
<dbReference type="InterPro" id="IPR004821">
    <property type="entry name" value="Cyt_trans-like"/>
</dbReference>
<dbReference type="InterPro" id="IPR001980">
    <property type="entry name" value="PPAT"/>
</dbReference>
<dbReference type="InterPro" id="IPR014729">
    <property type="entry name" value="Rossmann-like_a/b/a_fold"/>
</dbReference>
<dbReference type="NCBIfam" id="TIGR01510">
    <property type="entry name" value="coaD_prev_kdtB"/>
    <property type="match status" value="1"/>
</dbReference>
<dbReference type="NCBIfam" id="TIGR00125">
    <property type="entry name" value="cyt_tran_rel"/>
    <property type="match status" value="1"/>
</dbReference>
<dbReference type="PANTHER" id="PTHR21342">
    <property type="entry name" value="PHOSPHOPANTETHEINE ADENYLYLTRANSFERASE"/>
    <property type="match status" value="1"/>
</dbReference>
<dbReference type="PANTHER" id="PTHR21342:SF1">
    <property type="entry name" value="PHOSPHOPANTETHEINE ADENYLYLTRANSFERASE"/>
    <property type="match status" value="1"/>
</dbReference>
<dbReference type="Pfam" id="PF01467">
    <property type="entry name" value="CTP_transf_like"/>
    <property type="match status" value="1"/>
</dbReference>
<dbReference type="PRINTS" id="PR01020">
    <property type="entry name" value="LPSBIOSNTHSS"/>
</dbReference>
<dbReference type="SUPFAM" id="SSF52374">
    <property type="entry name" value="Nucleotidylyl transferase"/>
    <property type="match status" value="1"/>
</dbReference>
<evidence type="ECO:0000255" key="1">
    <source>
        <dbReference type="HAMAP-Rule" id="MF_00151"/>
    </source>
</evidence>
<name>COAD_DESOH</name>
<accession>A8ZXR7</accession>
<keyword id="KW-0067">ATP-binding</keyword>
<keyword id="KW-0173">Coenzyme A biosynthesis</keyword>
<keyword id="KW-0963">Cytoplasm</keyword>
<keyword id="KW-0460">Magnesium</keyword>
<keyword id="KW-0547">Nucleotide-binding</keyword>
<keyword id="KW-0548">Nucleotidyltransferase</keyword>
<keyword id="KW-1185">Reference proteome</keyword>
<keyword id="KW-0808">Transferase</keyword>
<reference key="1">
    <citation type="submission" date="2007-10" db="EMBL/GenBank/DDBJ databases">
        <title>Complete sequence of Desulfococcus oleovorans Hxd3.</title>
        <authorList>
            <consortium name="US DOE Joint Genome Institute"/>
            <person name="Copeland A."/>
            <person name="Lucas S."/>
            <person name="Lapidus A."/>
            <person name="Barry K."/>
            <person name="Glavina del Rio T."/>
            <person name="Dalin E."/>
            <person name="Tice H."/>
            <person name="Pitluck S."/>
            <person name="Kiss H."/>
            <person name="Brettin T."/>
            <person name="Bruce D."/>
            <person name="Detter J.C."/>
            <person name="Han C."/>
            <person name="Schmutz J."/>
            <person name="Larimer F."/>
            <person name="Land M."/>
            <person name="Hauser L."/>
            <person name="Kyrpides N."/>
            <person name="Kim E."/>
            <person name="Wawrik B."/>
            <person name="Richardson P."/>
        </authorList>
    </citation>
    <scope>NUCLEOTIDE SEQUENCE [LARGE SCALE GENOMIC DNA]</scope>
    <source>
        <strain>DSM 6200 / JCM 39069 / Hxd3</strain>
    </source>
</reference>
<organism>
    <name type="scientific">Desulfosudis oleivorans (strain DSM 6200 / JCM 39069 / Hxd3)</name>
    <name type="common">Desulfococcus oleovorans</name>
    <dbReference type="NCBI Taxonomy" id="96561"/>
    <lineage>
        <taxon>Bacteria</taxon>
        <taxon>Pseudomonadati</taxon>
        <taxon>Thermodesulfobacteriota</taxon>
        <taxon>Desulfobacteria</taxon>
        <taxon>Desulfobacterales</taxon>
        <taxon>Desulfosudaceae</taxon>
        <taxon>Desulfosudis</taxon>
    </lineage>
</organism>
<proteinExistence type="inferred from homology"/>